<organism>
    <name type="scientific">Drosophila melanogaster</name>
    <name type="common">Fruit fly</name>
    <dbReference type="NCBI Taxonomy" id="7227"/>
    <lineage>
        <taxon>Eukaryota</taxon>
        <taxon>Metazoa</taxon>
        <taxon>Ecdysozoa</taxon>
        <taxon>Arthropoda</taxon>
        <taxon>Hexapoda</taxon>
        <taxon>Insecta</taxon>
        <taxon>Pterygota</taxon>
        <taxon>Neoptera</taxon>
        <taxon>Endopterygota</taxon>
        <taxon>Diptera</taxon>
        <taxon>Brachycera</taxon>
        <taxon>Muscomorpha</taxon>
        <taxon>Ephydroidea</taxon>
        <taxon>Drosophilidae</taxon>
        <taxon>Drosophila</taxon>
        <taxon>Sophophora</taxon>
    </lineage>
</organism>
<protein>
    <recommendedName>
        <fullName>Putative 115 kDa protein in type-1 retrotransposable element R1DM</fullName>
    </recommendedName>
    <alternativeName>
        <fullName>ORF 2</fullName>
    </alternativeName>
    <alternativeName>
        <fullName>Putative 115 kDa protein in type I retrotransposable element R1DM</fullName>
    </alternativeName>
</protein>
<keyword id="KW-0814">Transposable element</keyword>
<sequence>TLMFSFIQANCGRGRAATIELGVRLRRSESMFALVQEPYLGGDEMDVLPEGMRVFTDRRGKAAILVDHQEAICMPVETLTTDYGVCLVVKGSFGSIFLCAAYCQFDAPLEPYLRYMDAVLLQASRTPAILGLDANAVSPMWLSKLSRHAEGQANYRRGELLSEWMLEARVAALNQSTEVYTFDNHRATSDIDVTIVNEAASMWATYEWRVDEWELSDHNIITVVAEPTTARSVESIAPVPSWNFSNARWRLFKEEMVSRIAELPENFSESPLDQQVSTLRSIVHSVCDTALGRKLTRSPSRRARWWTADLCAARREVRRLRRLLQDGRRRDDDAAVELVVVELRRASAYYKKLIGRAKMDDWKRFVGDHADDPWGRVYKICRGRRKCTEIGCLRVNGELITDWGDCARVLLRNFFPVAESEAPTAIAEEVPPALEVFEVDTCVARLKSRRSPGLDGINGTICKAVWRAIPEHLASLFSRCIRLGYFPAEWKCPRVVSLLKGPDKDKCEPSSYRGICLLPVFGKVLEAIMVNRVREVLPEGCRWQFGFRQGRCVEDAWRHVKSSVGASAAQYVLGTFVDFKGAFDNVEWSAALSRLADLGCREMGLWQSFFSGRRAVIRSSSGTVEVPVTRGCPQGSISGPFIWDILMDVLLQRLQPYCQLSAYADDLLLLVEGNSRAVLEEKGAQLMSIVETWGAEVGDCLSTSKTVIMLLKGALRRAPTVRFAGRNLPYVRSCRYLGITVSEGMKFLTHIASLRQRMTGVVGALARVLRADWGFSPRARRTIYDGLMAPCVLFGAPVWYDTAEQVAAQRRLASCQRLILLGCLSVCRTVSTVALQVLGGAPPLDLAAKLLAIKYKLKRGFPLEENDWLYGEDIACLSWEQRKTRLEECLIQSWQNRWDDDSEPGRVTHRFIPYVTLAYRDPSFGFSMRTSFLLTGHGSFNAFLHGRALSDTTACACGDPYEDWMHILCACPLYADLRDLDGLGVQRLGENWIFEGILDDQEKTQRLAMFAEEVFLRRRAL</sequence>
<accession>P16425</accession>
<reference key="1">
    <citation type="journal article" date="1990" name="J. Mol. Biol.">
        <title>Type I (R1) and type II (R2) ribosomal DNA insertions of Drosophila melanogaster are retrotransposable elements closely related to those of Bombyx mori.</title>
        <authorList>
            <person name="Jakubczak J.L."/>
            <person name="Xiong Y."/>
            <person name="Eickbush T.H."/>
        </authorList>
    </citation>
    <scope>NUCLEOTIDE SEQUENCE [GENOMIC DNA]</scope>
    <source>
        <strain>Oregon-R</strain>
    </source>
</reference>
<gene>
    <name type="primary">R1A1-element\ORF2</name>
</gene>
<proteinExistence type="predicted"/>
<name>Y2R2_DROME</name>
<dbReference type="EMBL" id="X51968">
    <property type="protein sequence ID" value="CAA36227.1"/>
    <property type="molecule type" value="Genomic_DNA"/>
</dbReference>
<dbReference type="PIR" id="S09111">
    <property type="entry name" value="S09111"/>
</dbReference>
<dbReference type="SMR" id="P16425"/>
<dbReference type="FlyBase" id="FBgn0044824">
    <property type="gene designation" value="R1A1-element\ORF2"/>
</dbReference>
<dbReference type="OrthoDB" id="411871at2759"/>
<dbReference type="PRO" id="PR:P16425"/>
<dbReference type="GO" id="GO:0003824">
    <property type="term" value="F:catalytic activity"/>
    <property type="evidence" value="ECO:0007669"/>
    <property type="project" value="InterPro"/>
</dbReference>
<dbReference type="GO" id="GO:0071897">
    <property type="term" value="P:DNA biosynthetic process"/>
    <property type="evidence" value="ECO:0007669"/>
    <property type="project" value="UniProtKB-ARBA"/>
</dbReference>
<dbReference type="CDD" id="cd09077">
    <property type="entry name" value="R1-I-EN"/>
    <property type="match status" value="1"/>
</dbReference>
<dbReference type="CDD" id="cd01650">
    <property type="entry name" value="RT_nLTR_like"/>
    <property type="match status" value="1"/>
</dbReference>
<dbReference type="Gene3D" id="3.60.10.10">
    <property type="entry name" value="Endonuclease/exonuclease/phosphatase"/>
    <property type="match status" value="1"/>
</dbReference>
<dbReference type="InterPro" id="IPR043502">
    <property type="entry name" value="DNA/RNA_pol_sf"/>
</dbReference>
<dbReference type="InterPro" id="IPR036691">
    <property type="entry name" value="Endo/exonu/phosph_ase_sf"/>
</dbReference>
<dbReference type="InterPro" id="IPR005135">
    <property type="entry name" value="Endo/exonuclease/phosphatase"/>
</dbReference>
<dbReference type="InterPro" id="IPR000477">
    <property type="entry name" value="RT_dom"/>
</dbReference>
<dbReference type="PANTHER" id="PTHR19446">
    <property type="entry name" value="REVERSE TRANSCRIPTASES"/>
    <property type="match status" value="1"/>
</dbReference>
<dbReference type="Pfam" id="PF14529">
    <property type="entry name" value="Exo_endo_phos_2"/>
    <property type="match status" value="1"/>
</dbReference>
<dbReference type="Pfam" id="PF00078">
    <property type="entry name" value="RVT_1"/>
    <property type="match status" value="1"/>
</dbReference>
<dbReference type="SUPFAM" id="SSF56672">
    <property type="entry name" value="DNA/RNA polymerases"/>
    <property type="match status" value="1"/>
</dbReference>
<dbReference type="SUPFAM" id="SSF56219">
    <property type="entry name" value="DNase I-like"/>
    <property type="match status" value="1"/>
</dbReference>
<dbReference type="PROSITE" id="PS50878">
    <property type="entry name" value="RT_POL"/>
    <property type="match status" value="1"/>
</dbReference>
<feature type="chain" id="PRO_0000066085" description="Putative 115 kDa protein in type-1 retrotransposable element R1DM">
    <location>
        <begin position="1"/>
        <end position="1021"/>
    </location>
</feature>
<feature type="domain" description="Reverse transcriptase" evidence="1">
    <location>
        <begin position="479"/>
        <end position="741"/>
    </location>
</feature>
<feature type="region of interest" description="Gag-like cysteine motif">
    <location>
        <begin position="955"/>
        <end position="971"/>
    </location>
</feature>
<evidence type="ECO:0000255" key="1">
    <source>
        <dbReference type="PROSITE-ProRule" id="PRU00405"/>
    </source>
</evidence>